<proteinExistence type="inferred from homology"/>
<feature type="chain" id="PRO_1000043008" description="Anthranilate phosphoribosyltransferase">
    <location>
        <begin position="1"/>
        <end position="348"/>
    </location>
</feature>
<feature type="binding site" evidence="1">
    <location>
        <position position="84"/>
    </location>
    <ligand>
        <name>5-phospho-alpha-D-ribose 1-diphosphate</name>
        <dbReference type="ChEBI" id="CHEBI:58017"/>
    </ligand>
</feature>
<feature type="binding site" evidence="1">
    <location>
        <position position="84"/>
    </location>
    <ligand>
        <name>anthranilate</name>
        <dbReference type="ChEBI" id="CHEBI:16567"/>
        <label>1</label>
    </ligand>
</feature>
<feature type="binding site" evidence="1">
    <location>
        <begin position="87"/>
        <end position="88"/>
    </location>
    <ligand>
        <name>5-phospho-alpha-D-ribose 1-diphosphate</name>
        <dbReference type="ChEBI" id="CHEBI:58017"/>
    </ligand>
</feature>
<feature type="binding site" evidence="1">
    <location>
        <position position="92"/>
    </location>
    <ligand>
        <name>5-phospho-alpha-D-ribose 1-diphosphate</name>
        <dbReference type="ChEBI" id="CHEBI:58017"/>
    </ligand>
</feature>
<feature type="binding site" evidence="1">
    <location>
        <begin position="94"/>
        <end position="97"/>
    </location>
    <ligand>
        <name>5-phospho-alpha-D-ribose 1-diphosphate</name>
        <dbReference type="ChEBI" id="CHEBI:58017"/>
    </ligand>
</feature>
<feature type="binding site" evidence="1">
    <location>
        <position position="96"/>
    </location>
    <ligand>
        <name>Mg(2+)</name>
        <dbReference type="ChEBI" id="CHEBI:18420"/>
        <label>1</label>
    </ligand>
</feature>
<feature type="binding site" evidence="1">
    <location>
        <begin position="112"/>
        <end position="120"/>
    </location>
    <ligand>
        <name>5-phospho-alpha-D-ribose 1-diphosphate</name>
        <dbReference type="ChEBI" id="CHEBI:58017"/>
    </ligand>
</feature>
<feature type="binding site" evidence="1">
    <location>
        <position position="115"/>
    </location>
    <ligand>
        <name>anthranilate</name>
        <dbReference type="ChEBI" id="CHEBI:16567"/>
        <label>1</label>
    </ligand>
</feature>
<feature type="binding site" evidence="1">
    <location>
        <position position="124"/>
    </location>
    <ligand>
        <name>5-phospho-alpha-D-ribose 1-diphosphate</name>
        <dbReference type="ChEBI" id="CHEBI:58017"/>
    </ligand>
</feature>
<feature type="binding site" evidence="1">
    <location>
        <position position="170"/>
    </location>
    <ligand>
        <name>anthranilate</name>
        <dbReference type="ChEBI" id="CHEBI:16567"/>
        <label>2</label>
    </ligand>
</feature>
<feature type="binding site" evidence="1">
    <location>
        <position position="228"/>
    </location>
    <ligand>
        <name>Mg(2+)</name>
        <dbReference type="ChEBI" id="CHEBI:18420"/>
        <label>2</label>
    </ligand>
</feature>
<feature type="binding site" evidence="1">
    <location>
        <position position="229"/>
    </location>
    <ligand>
        <name>Mg(2+)</name>
        <dbReference type="ChEBI" id="CHEBI:18420"/>
        <label>1</label>
    </ligand>
</feature>
<feature type="binding site" evidence="1">
    <location>
        <position position="229"/>
    </location>
    <ligand>
        <name>Mg(2+)</name>
        <dbReference type="ChEBI" id="CHEBI:18420"/>
        <label>2</label>
    </ligand>
</feature>
<comment type="function">
    <text evidence="1">Catalyzes the transfer of the phosphoribosyl group of 5-phosphorylribose-1-pyrophosphate (PRPP) to anthranilate to yield N-(5'-phosphoribosyl)-anthranilate (PRA).</text>
</comment>
<comment type="catalytic activity">
    <reaction evidence="1">
        <text>N-(5-phospho-beta-D-ribosyl)anthranilate + diphosphate = 5-phospho-alpha-D-ribose 1-diphosphate + anthranilate</text>
        <dbReference type="Rhea" id="RHEA:11768"/>
        <dbReference type="ChEBI" id="CHEBI:16567"/>
        <dbReference type="ChEBI" id="CHEBI:18277"/>
        <dbReference type="ChEBI" id="CHEBI:33019"/>
        <dbReference type="ChEBI" id="CHEBI:58017"/>
        <dbReference type="EC" id="2.4.2.18"/>
    </reaction>
</comment>
<comment type="cofactor">
    <cofactor evidence="1">
        <name>Mg(2+)</name>
        <dbReference type="ChEBI" id="CHEBI:18420"/>
    </cofactor>
    <text evidence="1">Binds 2 magnesium ions per monomer.</text>
</comment>
<comment type="pathway">
    <text evidence="1">Amino-acid biosynthesis; L-tryptophan biosynthesis; L-tryptophan from chorismate: step 2/5.</text>
</comment>
<comment type="subunit">
    <text evidence="1">Homodimer.</text>
</comment>
<comment type="similarity">
    <text evidence="1">Belongs to the anthranilate phosphoribosyltransferase family.</text>
</comment>
<sequence length="348" mass="36633">MTSPATLKVLNAYLDNPTPTLEEAIEVFTPLTVGEYDDVHIAALLATIRTRGEQFADIAGAAKAFLAAARPFPITGAGLLDSAGTGGDGANTINITTGASLIAASGGVKLVKHGNRSVSSKSGSADVLEALNIPLGLDVDRAVKWFEASNFTFLFAPAYNPAIAHVQPVRQALKFPTIFNTLGPLLSPARPERQIMGVANANHGQLIAEVFRELGRTRALVVHGAGTDEIAVHGTTLVWELKEDGTIEHYTIEPEDLGLGRYTLEDLVGGLGTENAEAMRATFAGTGPDAHRDALAASAGAMFYLNGDVDSLKDGAQKALSLLADGTTQAWLAKHEEIDYSEKESSND</sequence>
<keyword id="KW-0028">Amino-acid biosynthesis</keyword>
<keyword id="KW-0057">Aromatic amino acid biosynthesis</keyword>
<keyword id="KW-0328">Glycosyltransferase</keyword>
<keyword id="KW-0460">Magnesium</keyword>
<keyword id="KW-0479">Metal-binding</keyword>
<keyword id="KW-0808">Transferase</keyword>
<keyword id="KW-0822">Tryptophan biosynthesis</keyword>
<gene>
    <name evidence="1" type="primary">trpD</name>
    <name type="ordered locus">cgR_2918</name>
</gene>
<reference key="1">
    <citation type="journal article" date="2007" name="Microbiology">
        <title>Comparative analysis of the Corynebacterium glutamicum group and complete genome sequence of strain R.</title>
        <authorList>
            <person name="Yukawa H."/>
            <person name="Omumasaba C.A."/>
            <person name="Nonaka H."/>
            <person name="Kos P."/>
            <person name="Okai N."/>
            <person name="Suzuki N."/>
            <person name="Suda M."/>
            <person name="Tsuge Y."/>
            <person name="Watanabe J."/>
            <person name="Ikeda Y."/>
            <person name="Vertes A.A."/>
            <person name="Inui M."/>
        </authorList>
    </citation>
    <scope>NUCLEOTIDE SEQUENCE [LARGE SCALE GENOMIC DNA]</scope>
    <source>
        <strain>R</strain>
    </source>
</reference>
<evidence type="ECO:0000255" key="1">
    <source>
        <dbReference type="HAMAP-Rule" id="MF_00211"/>
    </source>
</evidence>
<accession>A4QI74</accession>
<dbReference type="EC" id="2.4.2.18" evidence="1"/>
<dbReference type="EMBL" id="AP009044">
    <property type="protein sequence ID" value="BAF55940.1"/>
    <property type="molecule type" value="Genomic_DNA"/>
</dbReference>
<dbReference type="RefSeq" id="WP_003855178.1">
    <property type="nucleotide sequence ID" value="NC_009342.1"/>
</dbReference>
<dbReference type="SMR" id="A4QI74"/>
<dbReference type="GeneID" id="1020974"/>
<dbReference type="KEGG" id="cgt:cgR_2918"/>
<dbReference type="HOGENOM" id="CLU_034315_2_1_11"/>
<dbReference type="PhylomeDB" id="A4QI74"/>
<dbReference type="UniPathway" id="UPA00035">
    <property type="reaction ID" value="UER00041"/>
</dbReference>
<dbReference type="Proteomes" id="UP000006698">
    <property type="component" value="Chromosome"/>
</dbReference>
<dbReference type="GO" id="GO:0005829">
    <property type="term" value="C:cytosol"/>
    <property type="evidence" value="ECO:0007669"/>
    <property type="project" value="TreeGrafter"/>
</dbReference>
<dbReference type="GO" id="GO:0004048">
    <property type="term" value="F:anthranilate phosphoribosyltransferase activity"/>
    <property type="evidence" value="ECO:0007669"/>
    <property type="project" value="UniProtKB-UniRule"/>
</dbReference>
<dbReference type="GO" id="GO:0000287">
    <property type="term" value="F:magnesium ion binding"/>
    <property type="evidence" value="ECO:0007669"/>
    <property type="project" value="UniProtKB-UniRule"/>
</dbReference>
<dbReference type="GO" id="GO:0000162">
    <property type="term" value="P:L-tryptophan biosynthetic process"/>
    <property type="evidence" value="ECO:0007669"/>
    <property type="project" value="UniProtKB-UniRule"/>
</dbReference>
<dbReference type="FunFam" id="3.40.1030.10:FF:000002">
    <property type="entry name" value="Anthranilate phosphoribosyltransferase"/>
    <property type="match status" value="1"/>
</dbReference>
<dbReference type="Gene3D" id="3.40.1030.10">
    <property type="entry name" value="Nucleoside phosphorylase/phosphoribosyltransferase catalytic domain"/>
    <property type="match status" value="1"/>
</dbReference>
<dbReference type="Gene3D" id="1.20.970.10">
    <property type="entry name" value="Transferase, Pyrimidine Nucleoside Phosphorylase, Chain C"/>
    <property type="match status" value="1"/>
</dbReference>
<dbReference type="HAMAP" id="MF_00211">
    <property type="entry name" value="TrpD"/>
    <property type="match status" value="1"/>
</dbReference>
<dbReference type="InterPro" id="IPR005940">
    <property type="entry name" value="Anthranilate_Pribosyl_Tfrase"/>
</dbReference>
<dbReference type="InterPro" id="IPR000312">
    <property type="entry name" value="Glycosyl_Trfase_fam3"/>
</dbReference>
<dbReference type="InterPro" id="IPR017459">
    <property type="entry name" value="Glycosyl_Trfase_fam3_N_dom"/>
</dbReference>
<dbReference type="InterPro" id="IPR036320">
    <property type="entry name" value="Glycosyl_Trfase_fam3_N_dom_sf"/>
</dbReference>
<dbReference type="InterPro" id="IPR035902">
    <property type="entry name" value="Nuc_phospho_transferase"/>
</dbReference>
<dbReference type="NCBIfam" id="TIGR01245">
    <property type="entry name" value="trpD"/>
    <property type="match status" value="1"/>
</dbReference>
<dbReference type="PANTHER" id="PTHR43285">
    <property type="entry name" value="ANTHRANILATE PHOSPHORIBOSYLTRANSFERASE"/>
    <property type="match status" value="1"/>
</dbReference>
<dbReference type="PANTHER" id="PTHR43285:SF2">
    <property type="entry name" value="ANTHRANILATE PHOSPHORIBOSYLTRANSFERASE"/>
    <property type="match status" value="1"/>
</dbReference>
<dbReference type="Pfam" id="PF02885">
    <property type="entry name" value="Glycos_trans_3N"/>
    <property type="match status" value="1"/>
</dbReference>
<dbReference type="Pfam" id="PF00591">
    <property type="entry name" value="Glycos_transf_3"/>
    <property type="match status" value="1"/>
</dbReference>
<dbReference type="SUPFAM" id="SSF52418">
    <property type="entry name" value="Nucleoside phosphorylase/phosphoribosyltransferase catalytic domain"/>
    <property type="match status" value="1"/>
</dbReference>
<dbReference type="SUPFAM" id="SSF47648">
    <property type="entry name" value="Nucleoside phosphorylase/phosphoribosyltransferase N-terminal domain"/>
    <property type="match status" value="1"/>
</dbReference>
<name>TRPD_CORGB</name>
<organism>
    <name type="scientific">Corynebacterium glutamicum (strain R)</name>
    <dbReference type="NCBI Taxonomy" id="340322"/>
    <lineage>
        <taxon>Bacteria</taxon>
        <taxon>Bacillati</taxon>
        <taxon>Actinomycetota</taxon>
        <taxon>Actinomycetes</taxon>
        <taxon>Mycobacteriales</taxon>
        <taxon>Corynebacteriaceae</taxon>
        <taxon>Corynebacterium</taxon>
    </lineage>
</organism>
<protein>
    <recommendedName>
        <fullName evidence="1">Anthranilate phosphoribosyltransferase</fullName>
        <ecNumber evidence="1">2.4.2.18</ecNumber>
    </recommendedName>
</protein>